<keyword id="KW-0966">Cell projection</keyword>
<keyword id="KW-0969">Cilium</keyword>
<keyword id="KW-0282">Flagellum</keyword>
<keyword id="KW-0677">Repeat</keyword>
<evidence type="ECO:0000250" key="1">
    <source>
        <dbReference type="UniProtKB" id="Q8S9F2"/>
    </source>
</evidence>
<evidence type="ECO:0000255" key="2">
    <source>
        <dbReference type="PROSITE-ProRule" id="PRU00030"/>
    </source>
</evidence>
<evidence type="ECO:0000255" key="3">
    <source>
        <dbReference type="PROSITE-ProRule" id="PRU00099"/>
    </source>
</evidence>
<evidence type="ECO:0000256" key="4">
    <source>
        <dbReference type="SAM" id="MobiDB-lite"/>
    </source>
</evidence>
<evidence type="ECO:0000269" key="5">
    <source>
    </source>
</evidence>
<evidence type="ECO:0000305" key="6"/>
<evidence type="ECO:0000312" key="7">
    <source>
        <dbReference type="EMBL" id="CAJ57396.1"/>
    </source>
</evidence>
<protein>
    <recommendedName>
        <fullName>Photoactivated adenylate cyclase subunit alpha-like protein ST-</fullName>
    </recommendedName>
</protein>
<dbReference type="EMBL" id="AM181337">
    <property type="protein sequence ID" value="CAJ57396.1"/>
    <property type="molecule type" value="mRNA"/>
</dbReference>
<dbReference type="SMR" id="P84739"/>
<dbReference type="GO" id="GO:0031514">
    <property type="term" value="C:motile cilium"/>
    <property type="evidence" value="ECO:0000314"/>
    <property type="project" value="UniProtKB"/>
</dbReference>
<dbReference type="GO" id="GO:0009882">
    <property type="term" value="F:blue light photoreceptor activity"/>
    <property type="evidence" value="ECO:0007669"/>
    <property type="project" value="InterPro"/>
</dbReference>
<dbReference type="GO" id="GO:0071949">
    <property type="term" value="F:FAD binding"/>
    <property type="evidence" value="ECO:0007669"/>
    <property type="project" value="InterPro"/>
</dbReference>
<dbReference type="GO" id="GO:0009190">
    <property type="term" value="P:cyclic nucleotide biosynthetic process"/>
    <property type="evidence" value="ECO:0007669"/>
    <property type="project" value="InterPro"/>
</dbReference>
<dbReference type="CDD" id="cd07302">
    <property type="entry name" value="CHD"/>
    <property type="match status" value="2"/>
</dbReference>
<dbReference type="FunFam" id="3.30.70.1230:FF:000065">
    <property type="entry name" value="Photoactivated adenylate cyclase subunit alpha-like protein ST"/>
    <property type="match status" value="1"/>
</dbReference>
<dbReference type="FunFam" id="3.30.70.100:FF:000061">
    <property type="entry name" value="Photoactivated adenylate cyclase subunit beta-like protein 1224-5/1F"/>
    <property type="match status" value="1"/>
</dbReference>
<dbReference type="FunFam" id="3.30.70.1230:FF:000058">
    <property type="entry name" value="Photoactivated adenylate cyclase subunit beta-like protein FB"/>
    <property type="match status" value="1"/>
</dbReference>
<dbReference type="FunFam" id="3.30.70.100:FF:000064">
    <property type="entry name" value="Photoactivated adenylate cyclase subunit beta-like protein ST"/>
    <property type="match status" value="1"/>
</dbReference>
<dbReference type="Gene3D" id="3.30.70.100">
    <property type="match status" value="2"/>
</dbReference>
<dbReference type="Gene3D" id="3.30.70.1230">
    <property type="entry name" value="Nucleotide cyclase"/>
    <property type="match status" value="2"/>
</dbReference>
<dbReference type="InterPro" id="IPR001054">
    <property type="entry name" value="A/G_cyclase"/>
</dbReference>
<dbReference type="InterPro" id="IPR036046">
    <property type="entry name" value="Acylphosphatase-like_dom_sf"/>
</dbReference>
<dbReference type="InterPro" id="IPR050697">
    <property type="entry name" value="Adenylyl/Guanylyl_Cyclase_3/4"/>
</dbReference>
<dbReference type="InterPro" id="IPR007024">
    <property type="entry name" value="BLUF_domain"/>
</dbReference>
<dbReference type="InterPro" id="IPR029787">
    <property type="entry name" value="Nucleotide_cyclase"/>
</dbReference>
<dbReference type="PANTHER" id="PTHR43081:SF1">
    <property type="entry name" value="ADENYLATE CYCLASE, TERMINAL-DIFFERENTIATION SPECIFIC"/>
    <property type="match status" value="1"/>
</dbReference>
<dbReference type="PANTHER" id="PTHR43081">
    <property type="entry name" value="ADENYLATE CYCLASE, TERMINAL-DIFFERENTIATION SPECIFIC-RELATED"/>
    <property type="match status" value="1"/>
</dbReference>
<dbReference type="Pfam" id="PF04940">
    <property type="entry name" value="BLUF"/>
    <property type="match status" value="2"/>
</dbReference>
<dbReference type="Pfam" id="PF00211">
    <property type="entry name" value="Guanylate_cyc"/>
    <property type="match status" value="1"/>
</dbReference>
<dbReference type="SMART" id="SM01034">
    <property type="entry name" value="BLUF"/>
    <property type="match status" value="2"/>
</dbReference>
<dbReference type="SUPFAM" id="SSF54975">
    <property type="entry name" value="Acylphosphatase/BLUF domain-like"/>
    <property type="match status" value="2"/>
</dbReference>
<dbReference type="SUPFAM" id="SSF55073">
    <property type="entry name" value="Nucleotide cyclase"/>
    <property type="match status" value="2"/>
</dbReference>
<dbReference type="PROSITE" id="PS50925">
    <property type="entry name" value="BLUF"/>
    <property type="match status" value="2"/>
</dbReference>
<dbReference type="PROSITE" id="PS50125">
    <property type="entry name" value="GUANYLATE_CYCLASE_2"/>
    <property type="match status" value="2"/>
</dbReference>
<organism>
    <name type="scientific">Euglena gracilis</name>
    <dbReference type="NCBI Taxonomy" id="3039"/>
    <lineage>
        <taxon>Eukaryota</taxon>
        <taxon>Discoba</taxon>
        <taxon>Euglenozoa</taxon>
        <taxon>Euglenida</taxon>
        <taxon>Spirocuta</taxon>
        <taxon>Euglenophyceae</taxon>
        <taxon>Euglenales</taxon>
        <taxon>Euglenaceae</taxon>
        <taxon>Euglena</taxon>
    </lineage>
</organism>
<reference evidence="6" key="1">
    <citation type="journal article" date="2005" name="Photochem. Photobiol. Sci.">
        <title>Photoactivated adenylyl cyclase (PAC) genes in the flagellate Euglena gracilis mutant strains.</title>
        <authorList>
            <person name="Ntefidou M."/>
            <person name="Haeder D.-P."/>
        </authorList>
    </citation>
    <scope>NUCLEOTIDE SEQUENCE [MRNA]</scope>
    <scope>SUBCELLULAR LOCATION</scope>
    <source>
        <strain evidence="5">ST-</strain>
    </source>
</reference>
<proteinExistence type="evidence at transcript level"/>
<feature type="chain" id="PRO_0000195721" description="Photoactivated adenylate cyclase subunit alpha-like protein ST-">
    <location>
        <begin position="1"/>
        <end position="1019"/>
    </location>
</feature>
<feature type="domain" description="BLUF 1" evidence="2">
    <location>
        <begin position="55"/>
        <end position="148"/>
    </location>
</feature>
<feature type="domain" description="Guanylate cyclase 1" evidence="3">
    <location>
        <begin position="204"/>
        <end position="332"/>
    </location>
</feature>
<feature type="domain" description="BLUF 2" evidence="2">
    <location>
        <begin position="467"/>
        <end position="559"/>
    </location>
</feature>
<feature type="domain" description="Guanylate cyclase 2" evidence="3">
    <location>
        <begin position="615"/>
        <end position="744"/>
    </location>
</feature>
<feature type="region of interest" description="Disordered" evidence="4">
    <location>
        <begin position="801"/>
        <end position="846"/>
    </location>
</feature>
<feature type="region of interest" description="Disordered" evidence="4">
    <location>
        <begin position="887"/>
        <end position="923"/>
    </location>
</feature>
<feature type="region of interest" description="Disordered" evidence="4">
    <location>
        <begin position="963"/>
        <end position="993"/>
    </location>
</feature>
<feature type="compositionally biased region" description="Basic residues" evidence="4">
    <location>
        <begin position="821"/>
        <end position="834"/>
    </location>
</feature>
<comment type="subunit">
    <text evidence="1">Heterotetramer of two alpha and two beta subunits.</text>
</comment>
<comment type="subcellular location">
    <subcellularLocation>
        <location evidence="5">Cell projection</location>
        <location evidence="5">Cilium</location>
        <location evidence="5">Flagellum</location>
    </subcellularLocation>
</comment>
<comment type="miscellaneous">
    <text>The ST- strain is deficient in phototaxis. It is not known if this is due to defective adenylate cyclase activity or defective BLUF domains in this protein. In wild-type E.gracilis, photoactivated adenylate cyclase is found in the paraxonemal bodies (PABs). PABs are absent from this strain.</text>
</comment>
<comment type="similarity">
    <text evidence="3">Belongs to the adenylyl cyclase class-4/guanylyl cyclase family.</text>
</comment>
<name>PALST_EUGGR</name>
<sequence length="1019" mass="112470">MYNRVYKERQEIRTIQGLEASGQFQTASNITDIQIYSINVTPTMSKGGETGETQLRRLMYLSASTEPEKCNAEYLADMAHVATLRNKAIGVIRFLLYSSPFFFQVIEGTDEDLDFLFAKISADPRHERCIVLANGPCTGRMYGEWHMKDSHIDNITNNPAIKTILFQIARSFTSMWSYLPKNAANMLLLGKNPNKQGPEPRSVVLTFIYLVEFSSILAHPGLTEQCADILAAFVEASVRNCEGTWGLVAKFITGTCVAYWPINRAEDALVGLQQLSEDLAVLRSYQPPGSALSRIYSRRGVHYGRALLCNAGFRKADFTLLGDCINTASRITSLSVKLKVPLLLSFEVRCLLGDEMREELERSALHKVKGRDKPVQVYQFNAPELDSALVRAKIEQFNPGRYRALCPVKPYESLHPAQRPPIFDDTPRENQPKLSQVQRRDSLVDRLSLIAKLAFPSSMMAGGEGQLITLTYISQAAHPMSRFDLASIQRIAFARNESSNITGSLLYVSGLFVQTLDDPKGAVESLYLKIRQDKRHKDVVAVFMAPIDERVYGTPLDMTSATEEMLATFPPLQDVLSQLAKSFISLETYVPSTVVRYLTAGNNPRNLQPVSVEVVMLATDICSFTPLSEKCSLTEVWTICNTFIDACTSAICNEGGEVIKLIGDCVTAYFAPTGADNAVHACQEIVSFSAQLRDAFHDVLDCRSVVACGVGLDFGQVIMAQCGSLRLTEFVVAGEVSARVMAVEALTREAGRAIVITEPVSDRLSAKLRDTGIVPCQEGLHAVLLWYPGPRMGIGCANHQEDHLRVPRRPGPGRHEEGGRRHQRPGPGRPRRGHPFLPQGSTTRPHQFSVQLHPLPKLGTGSSDGGIGVSLHVYSAGRYRQQLHRRQIAAGGQRRSVGPGQDVARATRAHACDAGHQAPDQPANAQYERQFRGGQQRWRTCGIVHSNAFVTGVGLVQQPWLDEGHRPEAPHQSLHPGPGDPSEQHPHRPNRATEPGLLVARQPAVCLHRPEGFAQICTF</sequence>
<accession>P84739</accession>
<accession>Q2P9M8</accession>
<gene>
    <name evidence="7" type="primary">pacA</name>
</gene>